<organism>
    <name type="scientific">Streptomyces cyslabdanicus</name>
    <dbReference type="NCBI Taxonomy" id="1470456"/>
    <lineage>
        <taxon>Bacteria</taxon>
        <taxon>Bacillati</taxon>
        <taxon>Actinomycetota</taxon>
        <taxon>Actinomycetes</taxon>
        <taxon>Kitasatosporales</taxon>
        <taxon>Streptomycetaceae</taxon>
        <taxon>Streptomyces</taxon>
    </lineage>
</organism>
<sequence>MSSISHQAAPTRAQHTNSYVQLARQLVTSVDNDPWGDVPPSVYETARVTSWAPWLEGHERRLAWLLERQSAAGSWGEGPTPYRLLPTLSVTEALLSTLRQNTAAGVSRERLAAAVDNGLAALRDLSGTGGWPDTAAIEILAPDLVVLINDHLDQPEVAALPRLGPWARGQRLAQPHGFQAALPDRVAERCQVAGGVPLKLHHTFEGVARRLPRMVPGVPGGLLGSSPAATAAWLATGPDEGRDQAVTALTAVAERYDGLFPEATPISVFERLWISVALARPGLPAACVPTIRAWAAEIYDATGVRGAPGLLPDTDDTAMAVLASALAGSPRDPSPLSAFEAGDHYDCYVGEDTGSSTANAHALQALTAWLSHRPATGDALQARRDLTRDWLLAQQESDGAWRDKWHASPYYATERCVTALSGHTGPTTRDAIRSAADWVLDAQSDDGSWGVWGGTAEETAYAVNILLNSPDHTGTPEATQALKLAENVLREAVHSSGHHHPALWHDKTLYAPQAMAQAEVIAALELLQARRP</sequence>
<comment type="function">
    <text evidence="1 2">Involved in the biosynthesis of the mercapturic acid derivative diterpene cyslabdan A, a potentiator of the beta-lactam antibiotic imipenem (PubMed:26507838). Catalyzes the conversion of geranylgeranyl diphosphate (GGDP) into (+)-copalyl diphosphate (PubMed:26507838, PubMed:26814669).</text>
</comment>
<comment type="catalytic activity">
    <reaction evidence="6">
        <text>(2E,6E,10E)-geranylgeranyl diphosphate = (+)-copalyl diphosphate</text>
        <dbReference type="Rhea" id="RHEA:24316"/>
        <dbReference type="ChEBI" id="CHEBI:58635"/>
        <dbReference type="ChEBI" id="CHEBI:58756"/>
        <dbReference type="EC" id="5.5.1.12"/>
    </reaction>
</comment>
<comment type="cofactor">
    <cofactor evidence="6">
        <name>Mg(2+)</name>
        <dbReference type="ChEBI" id="CHEBI:18420"/>
    </cofactor>
</comment>
<comment type="domain">
    <text evidence="5 6">The Asp-Xaa-Asp-Asp-Thr-Ala (DXDDTA) and Gln-Xaa-Xaa-Asp-Gly-Ser-Trp (QXXDGSW) motifs are expected to bind to Mg(2+).</text>
</comment>
<comment type="similarity">
    <text evidence="4">Belongs to the terpene synthase family.</text>
</comment>
<keyword id="KW-0413">Isomerase</keyword>
<keyword id="KW-0460">Magnesium</keyword>
<keyword id="KW-0479">Metal-binding</keyword>
<feature type="chain" id="PRO_0000444810" description="Copalyl diphosphate synthase">
    <location>
        <begin position="1"/>
        <end position="532"/>
    </location>
</feature>
<feature type="short sequence motif" description="DXDDTA motif" evidence="5 6">
    <location>
        <begin position="313"/>
        <end position="318"/>
    </location>
</feature>
<feature type="short sequence motif" description="QXXDGSW motif" evidence="5 6">
    <location>
        <begin position="443"/>
        <end position="449"/>
    </location>
</feature>
<gene>
    <name evidence="3" type="primary">cldB</name>
</gene>
<name>CLDB_STRCP</name>
<accession>A0A0H5BB10</accession>
<proteinExistence type="evidence at protein level"/>
<reference key="1">
    <citation type="journal article" date="2016" name="J. Ind. Microbiol. Biotechnol.">
        <title>Biosynthesis of mercapturic acid derivative of the labdane-type diterpene, cyslabdan that potentiates imipenem activity against methicillin-resistant Staphylococcus aureus: cyslabdan is generated by mycothiol-mediated xenobiotic detoxification.</title>
        <authorList>
            <person name="Ikeda H."/>
            <person name="Shin-ya K."/>
            <person name="Nagamitsu T."/>
            <person name="Tomoda H."/>
        </authorList>
    </citation>
    <scope>NUCLEOTIDE SEQUENCE [GENOMIC DNA]</scope>
    <scope>FUNCTION</scope>
    <scope>DOMAIN</scope>
    <source>
        <strain>DSM 42135 / NBRC 110081 / K04-0144</strain>
    </source>
</reference>
<reference key="2">
    <citation type="journal article" date="2016" name="J. Antibiot.">
        <title>Chemical diversity of labdane-type bicyclic diterpene biosynthesis in Actinomycetales microorganisms.</title>
        <authorList>
            <person name="Yamada Y."/>
            <person name="Komatsu M."/>
            <person name="Ikeda H."/>
        </authorList>
    </citation>
    <scope>FUNCTION</scope>
    <scope>CATALYTIC ACTIVITY</scope>
    <scope>COFACTOR</scope>
    <scope>DOMAIN</scope>
    <source>
        <strain>DSM 42135 / NBRC 110081 / K04-0144</strain>
    </source>
</reference>
<evidence type="ECO:0000269" key="1">
    <source>
    </source>
</evidence>
<evidence type="ECO:0000269" key="2">
    <source>
    </source>
</evidence>
<evidence type="ECO:0000303" key="3">
    <source>
    </source>
</evidence>
<evidence type="ECO:0000305" key="4"/>
<evidence type="ECO:0000305" key="5">
    <source>
    </source>
</evidence>
<evidence type="ECO:0000305" key="6">
    <source>
    </source>
</evidence>
<dbReference type="EC" id="5.5.1.12" evidence="6"/>
<dbReference type="EMBL" id="LC064028">
    <property type="protein sequence ID" value="BAR97451.1"/>
    <property type="molecule type" value="Genomic_DNA"/>
</dbReference>
<dbReference type="SMR" id="A0A0H5BB10"/>
<dbReference type="GO" id="GO:0050559">
    <property type="term" value="F:copalyl diphosphate synthase activity"/>
    <property type="evidence" value="ECO:0007669"/>
    <property type="project" value="UniProtKB-EC"/>
</dbReference>
<dbReference type="GO" id="GO:0000287">
    <property type="term" value="F:magnesium ion binding"/>
    <property type="evidence" value="ECO:0007669"/>
    <property type="project" value="TreeGrafter"/>
</dbReference>
<dbReference type="GO" id="GO:0010333">
    <property type="term" value="F:terpene synthase activity"/>
    <property type="evidence" value="ECO:0007669"/>
    <property type="project" value="InterPro"/>
</dbReference>
<dbReference type="GO" id="GO:0016102">
    <property type="term" value="P:diterpenoid biosynthetic process"/>
    <property type="evidence" value="ECO:0007669"/>
    <property type="project" value="TreeGrafter"/>
</dbReference>
<dbReference type="Gene3D" id="1.50.10.160">
    <property type="match status" value="1"/>
</dbReference>
<dbReference type="Gene3D" id="1.50.10.20">
    <property type="match status" value="1"/>
</dbReference>
<dbReference type="InterPro" id="IPR032696">
    <property type="entry name" value="SQ_cyclase_C"/>
</dbReference>
<dbReference type="InterPro" id="IPR050148">
    <property type="entry name" value="Terpene_synthase-like"/>
</dbReference>
<dbReference type="InterPro" id="IPR008930">
    <property type="entry name" value="Terpenoid_cyclase/PrenylTrfase"/>
</dbReference>
<dbReference type="PANTHER" id="PTHR31739:SF25">
    <property type="entry name" value="(E,E)-GERANYLLINALOOL SYNTHASE"/>
    <property type="match status" value="1"/>
</dbReference>
<dbReference type="PANTHER" id="PTHR31739">
    <property type="entry name" value="ENT-COPALYL DIPHOSPHATE SYNTHASE, CHLOROPLASTIC"/>
    <property type="match status" value="1"/>
</dbReference>
<dbReference type="Pfam" id="PF13243">
    <property type="entry name" value="SQHop_cyclase_C"/>
    <property type="match status" value="1"/>
</dbReference>
<dbReference type="SUPFAM" id="SSF48239">
    <property type="entry name" value="Terpenoid cyclases/Protein prenyltransferases"/>
    <property type="match status" value="1"/>
</dbReference>
<protein>
    <recommendedName>
        <fullName evidence="3">Copalyl diphosphate synthase</fullName>
        <ecNumber evidence="6">5.5.1.12</ecNumber>
    </recommendedName>
    <alternativeName>
        <fullName evidence="3">Type-B diterpene synthase</fullName>
    </alternativeName>
</protein>